<proteinExistence type="evidence at transcript level"/>
<dbReference type="EC" id="1.15.1.1"/>
<dbReference type="EMBL" id="M37150">
    <property type="protein sequence ID" value="AAA34194.1"/>
    <property type="molecule type" value="mRNA"/>
</dbReference>
<dbReference type="EMBL" id="X14040">
    <property type="protein sequence ID" value="CAA32199.1"/>
    <property type="molecule type" value="mRNA"/>
</dbReference>
<dbReference type="PIR" id="S08350">
    <property type="entry name" value="S08350"/>
</dbReference>
<dbReference type="SMR" id="P14830"/>
<dbReference type="FunCoup" id="P14830">
    <property type="interactions" value="1617"/>
</dbReference>
<dbReference type="STRING" id="4081.P14830"/>
<dbReference type="InParanoid" id="P14830"/>
<dbReference type="Proteomes" id="UP000004994">
    <property type="component" value="Unplaced"/>
</dbReference>
<dbReference type="ExpressionAtlas" id="P14830">
    <property type="expression patterns" value="baseline and differential"/>
</dbReference>
<dbReference type="GO" id="GO:0005737">
    <property type="term" value="C:cytoplasm"/>
    <property type="evidence" value="ECO:0007669"/>
    <property type="project" value="UniProtKB-SubCell"/>
</dbReference>
<dbReference type="GO" id="GO:0005507">
    <property type="term" value="F:copper ion binding"/>
    <property type="evidence" value="ECO:0000318"/>
    <property type="project" value="GO_Central"/>
</dbReference>
<dbReference type="GO" id="GO:0004784">
    <property type="term" value="F:superoxide dismutase activity"/>
    <property type="evidence" value="ECO:0000318"/>
    <property type="project" value="GO_Central"/>
</dbReference>
<dbReference type="GO" id="GO:0019430">
    <property type="term" value="P:removal of superoxide radicals"/>
    <property type="evidence" value="ECO:0000318"/>
    <property type="project" value="GO_Central"/>
</dbReference>
<dbReference type="CDD" id="cd00305">
    <property type="entry name" value="Cu-Zn_Superoxide_Dismutase"/>
    <property type="match status" value="1"/>
</dbReference>
<dbReference type="FunFam" id="2.60.40.200:FF:000001">
    <property type="entry name" value="Superoxide dismutase [Cu-Zn]"/>
    <property type="match status" value="1"/>
</dbReference>
<dbReference type="Gene3D" id="2.60.40.200">
    <property type="entry name" value="Superoxide dismutase, copper/zinc binding domain"/>
    <property type="match status" value="1"/>
</dbReference>
<dbReference type="InterPro" id="IPR036423">
    <property type="entry name" value="SOD-like_Cu/Zn_dom_sf"/>
</dbReference>
<dbReference type="InterPro" id="IPR024134">
    <property type="entry name" value="SOD_Cu/Zn_/chaperone"/>
</dbReference>
<dbReference type="InterPro" id="IPR018152">
    <property type="entry name" value="SOD_Cu/Zn_BS"/>
</dbReference>
<dbReference type="InterPro" id="IPR001424">
    <property type="entry name" value="SOD_Cu_Zn_dom"/>
</dbReference>
<dbReference type="PANTHER" id="PTHR10003">
    <property type="entry name" value="SUPEROXIDE DISMUTASE CU-ZN -RELATED"/>
    <property type="match status" value="1"/>
</dbReference>
<dbReference type="Pfam" id="PF00080">
    <property type="entry name" value="Sod_Cu"/>
    <property type="match status" value="1"/>
</dbReference>
<dbReference type="PRINTS" id="PR00068">
    <property type="entry name" value="CUZNDISMTASE"/>
</dbReference>
<dbReference type="SUPFAM" id="SSF49329">
    <property type="entry name" value="Cu,Zn superoxide dismutase-like"/>
    <property type="match status" value="1"/>
</dbReference>
<dbReference type="PROSITE" id="PS00087">
    <property type="entry name" value="SOD_CU_ZN_1"/>
    <property type="match status" value="1"/>
</dbReference>
<dbReference type="PROSITE" id="PS00332">
    <property type="entry name" value="SOD_CU_ZN_2"/>
    <property type="match status" value="1"/>
</dbReference>
<organism>
    <name type="scientific">Solanum lycopersicum</name>
    <name type="common">Tomato</name>
    <name type="synonym">Lycopersicon esculentum</name>
    <dbReference type="NCBI Taxonomy" id="4081"/>
    <lineage>
        <taxon>Eukaryota</taxon>
        <taxon>Viridiplantae</taxon>
        <taxon>Streptophyta</taxon>
        <taxon>Embryophyta</taxon>
        <taxon>Tracheophyta</taxon>
        <taxon>Spermatophyta</taxon>
        <taxon>Magnoliopsida</taxon>
        <taxon>eudicotyledons</taxon>
        <taxon>Gunneridae</taxon>
        <taxon>Pentapetalae</taxon>
        <taxon>asterids</taxon>
        <taxon>lamiids</taxon>
        <taxon>Solanales</taxon>
        <taxon>Solanaceae</taxon>
        <taxon>Solanoideae</taxon>
        <taxon>Solaneae</taxon>
        <taxon>Solanum</taxon>
        <taxon>Solanum subgen. Lycopersicon</taxon>
    </lineage>
</organism>
<gene>
    <name type="primary">SODCC.1</name>
</gene>
<evidence type="ECO:0000250" key="1"/>
<evidence type="ECO:0000305" key="2"/>
<accession>P14830</accession>
<feature type="initiator methionine" description="Removed" evidence="1">
    <location>
        <position position="1"/>
    </location>
</feature>
<feature type="chain" id="PRO_0000164139" description="Superoxide dismutase [Cu-Zn] 1">
    <location>
        <begin position="2"/>
        <end position="152"/>
    </location>
</feature>
<feature type="binding site" evidence="1">
    <location>
        <position position="45"/>
    </location>
    <ligand>
        <name>Cu cation</name>
        <dbReference type="ChEBI" id="CHEBI:23378"/>
        <note>catalytic</note>
    </ligand>
</feature>
<feature type="binding site" evidence="1">
    <location>
        <position position="47"/>
    </location>
    <ligand>
        <name>Cu cation</name>
        <dbReference type="ChEBI" id="CHEBI:23378"/>
        <note>catalytic</note>
    </ligand>
</feature>
<feature type="binding site" evidence="1">
    <location>
        <position position="62"/>
    </location>
    <ligand>
        <name>Cu cation</name>
        <dbReference type="ChEBI" id="CHEBI:23378"/>
        <note>catalytic</note>
    </ligand>
</feature>
<feature type="binding site" evidence="1">
    <location>
        <position position="62"/>
    </location>
    <ligand>
        <name>Zn(2+)</name>
        <dbReference type="ChEBI" id="CHEBI:29105"/>
        <note>structural</note>
    </ligand>
</feature>
<feature type="binding site" evidence="1">
    <location>
        <position position="70"/>
    </location>
    <ligand>
        <name>Zn(2+)</name>
        <dbReference type="ChEBI" id="CHEBI:29105"/>
        <note>structural</note>
    </ligand>
</feature>
<feature type="binding site" evidence="1">
    <location>
        <position position="79"/>
    </location>
    <ligand>
        <name>Zn(2+)</name>
        <dbReference type="ChEBI" id="CHEBI:29105"/>
        <note>structural</note>
    </ligand>
</feature>
<feature type="binding site" evidence="1">
    <location>
        <position position="82"/>
    </location>
    <ligand>
        <name>Zn(2+)</name>
        <dbReference type="ChEBI" id="CHEBI:29105"/>
        <note>structural</note>
    </ligand>
</feature>
<feature type="binding site" evidence="1">
    <location>
        <position position="119"/>
    </location>
    <ligand>
        <name>Cu cation</name>
        <dbReference type="ChEBI" id="CHEBI:23378"/>
        <note>catalytic</note>
    </ligand>
</feature>
<feature type="disulfide bond" evidence="1">
    <location>
        <begin position="56"/>
        <end position="145"/>
    </location>
</feature>
<sequence>MVKAVAVLNSSEGVSGTYLFTQVGVAPTTVNGNISGLKPGLHGFHVHALGDTTNGCMSTGPHYNPAGKEHGAPEDEVRHAGDLGNITVGEDGTASFTITDKQIPLTGPQSIIGRAVVVHADPDDLGKGGHELSKSTGNAGGRIACGIIGLQG</sequence>
<keyword id="KW-0049">Antioxidant</keyword>
<keyword id="KW-0186">Copper</keyword>
<keyword id="KW-0963">Cytoplasm</keyword>
<keyword id="KW-1015">Disulfide bond</keyword>
<keyword id="KW-0479">Metal-binding</keyword>
<keyword id="KW-0560">Oxidoreductase</keyword>
<keyword id="KW-1185">Reference proteome</keyword>
<keyword id="KW-0862">Zinc</keyword>
<protein>
    <recommendedName>
        <fullName>Superoxide dismutase [Cu-Zn] 1</fullName>
        <ecNumber>1.15.1.1</ecNumber>
    </recommendedName>
</protein>
<name>SODC1_SOLLC</name>
<comment type="function">
    <text>Destroys radicals which are normally produced within the cells and which are toxic to biological systems.</text>
</comment>
<comment type="catalytic activity">
    <reaction>
        <text>2 superoxide + 2 H(+) = H2O2 + O2</text>
        <dbReference type="Rhea" id="RHEA:20696"/>
        <dbReference type="ChEBI" id="CHEBI:15378"/>
        <dbReference type="ChEBI" id="CHEBI:15379"/>
        <dbReference type="ChEBI" id="CHEBI:16240"/>
        <dbReference type="ChEBI" id="CHEBI:18421"/>
        <dbReference type="EC" id="1.15.1.1"/>
    </reaction>
</comment>
<comment type="cofactor">
    <cofactor evidence="1">
        <name>Cu cation</name>
        <dbReference type="ChEBI" id="CHEBI:23378"/>
    </cofactor>
    <text evidence="1">Binds 1 copper ion per subunit.</text>
</comment>
<comment type="cofactor">
    <cofactor evidence="1">
        <name>Zn(2+)</name>
        <dbReference type="ChEBI" id="CHEBI:29105"/>
    </cofactor>
    <text evidence="1">Binds 1 zinc ion per subunit.</text>
</comment>
<comment type="subunit">
    <text>Homodimer.</text>
</comment>
<comment type="subcellular location">
    <subcellularLocation>
        <location>Cytoplasm</location>
    </subcellularLocation>
</comment>
<comment type="similarity">
    <text evidence="2">Belongs to the Cu-Zn superoxide dismutase family.</text>
</comment>
<reference key="1">
    <citation type="journal article" date="1988" name="Plant Mol. Biol.">
        <title>Isolation of two cDNA clones from tomato containing two different superoxide dismutase sequences.</title>
        <authorList>
            <person name="Perl-Treves R."/>
            <person name="Nacmias B."/>
            <person name="Aviv D."/>
            <person name="Zeelon E.P."/>
            <person name="Galun E."/>
        </authorList>
        <dbReference type="AGRICOLA" id="IND92000006"/>
    </citation>
    <scope>NUCLEOTIDE SEQUENCE [MRNA]</scope>
    <source>
        <strain>cv. Sherry</strain>
        <tissue>Leaf</tissue>
    </source>
</reference>